<feature type="chain" id="PRO_0000442430" description="Dynein axonemal heavy chain 1">
    <location>
        <begin position="1"/>
        <end position="4250"/>
    </location>
</feature>
<feature type="region of interest" description="Stem" evidence="1">
    <location>
        <begin position="1"/>
        <end position="1527"/>
    </location>
</feature>
<feature type="region of interest" description="Disordered" evidence="5">
    <location>
        <begin position="1"/>
        <end position="73"/>
    </location>
</feature>
<feature type="region of interest" description="AAA 1" evidence="1">
    <location>
        <begin position="1528"/>
        <end position="1749"/>
    </location>
</feature>
<feature type="region of interest" description="AAA 2" evidence="1">
    <location>
        <begin position="1809"/>
        <end position="2042"/>
    </location>
</feature>
<feature type="region of interest" description="AAA 3" evidence="1">
    <location>
        <begin position="2174"/>
        <end position="2434"/>
    </location>
</feature>
<feature type="region of interest" description="AAA 4" evidence="1">
    <location>
        <begin position="2532"/>
        <end position="2784"/>
    </location>
</feature>
<feature type="region of interest" description="Stalk" evidence="1">
    <location>
        <begin position="2799"/>
        <end position="3097"/>
    </location>
</feature>
<feature type="region of interest" description="AAA 5" evidence="1">
    <location>
        <begin position="3182"/>
        <end position="3412"/>
    </location>
</feature>
<feature type="region of interest" description="AAA 6" evidence="1">
    <location>
        <begin position="3625"/>
        <end position="3844"/>
    </location>
</feature>
<feature type="coiled-coil region" evidence="4">
    <location>
        <begin position="3045"/>
        <end position="3128"/>
    </location>
</feature>
<feature type="short sequence motif" description="GPAGTGKT motif">
    <location>
        <begin position="1566"/>
        <end position="1573"/>
    </location>
</feature>
<feature type="short sequence motif" description="CFDEFNR motif">
    <location>
        <begin position="1616"/>
        <end position="1622"/>
    </location>
</feature>
<feature type="compositionally biased region" description="Basic and acidic residues" evidence="5">
    <location>
        <begin position="24"/>
        <end position="42"/>
    </location>
</feature>
<feature type="compositionally biased region" description="Pro residues" evidence="5">
    <location>
        <begin position="46"/>
        <end position="55"/>
    </location>
</feature>
<feature type="binding site" evidence="4">
    <location>
        <begin position="1566"/>
        <end position="1573"/>
    </location>
    <ligand>
        <name>ATP</name>
        <dbReference type="ChEBI" id="CHEBI:30616"/>
    </ligand>
</feature>
<feature type="binding site" evidence="4">
    <location>
        <begin position="1847"/>
        <end position="1854"/>
    </location>
    <ligand>
        <name>ATP</name>
        <dbReference type="ChEBI" id="CHEBI:30616"/>
    </ligand>
</feature>
<feature type="binding site" evidence="4">
    <location>
        <begin position="2212"/>
        <end position="2219"/>
    </location>
    <ligand>
        <name>ATP</name>
        <dbReference type="ChEBI" id="CHEBI:30616"/>
    </ligand>
</feature>
<feature type="binding site" evidence="4">
    <location>
        <begin position="2571"/>
        <end position="2578"/>
    </location>
    <ligand>
        <name>ATP</name>
        <dbReference type="ChEBI" id="CHEBI:30616"/>
    </ligand>
</feature>
<feature type="splice variant" id="VSP_059235" description="In isoform 2.">
    <original>LVSVPEYPFREQKEDFTFV</original>
    <variation>ESHWTLAAHLASSPHLRLS</variation>
    <location>
        <begin position="468"/>
        <end position="486"/>
    </location>
</feature>
<feature type="splice variant" id="VSP_059236" description="In isoform 2.">
    <location>
        <begin position="487"/>
        <end position="4250"/>
    </location>
</feature>
<feature type="sequence conflict" description="In Ref. 5; CAB06069." evidence="8" ref="5">
    <original>I</original>
    <variation>L</variation>
    <location>
        <position position="839"/>
    </location>
</feature>
<feature type="sequence conflict" description="In Ref. 5; CAB06069." evidence="8" ref="5">
    <original>D</original>
    <variation>V</variation>
    <location>
        <position position="854"/>
    </location>
</feature>
<feature type="sequence conflict" description="In Ref. 5; CAB06069." evidence="8" ref="5">
    <original>A</original>
    <variation>G</variation>
    <location>
        <position position="1111"/>
    </location>
</feature>
<feature type="sequence conflict" description="In Ref. 5; CAB06069." evidence="8" ref="5">
    <original>V</original>
    <variation>M</variation>
    <location>
        <position position="1136"/>
    </location>
</feature>
<feature type="sequence conflict" description="In Ref. 5; CAB06069." evidence="8" ref="5">
    <original>Y</original>
    <variation>S</variation>
    <location>
        <position position="1302"/>
    </location>
</feature>
<feature type="sequence conflict" description="In Ref. 5; CAB06069." evidence="8" ref="5">
    <original>S</original>
    <variation>I</variation>
    <location>
        <position position="1389"/>
    </location>
</feature>
<feature type="sequence conflict" description="In Ref. 5; CAB06069." evidence="8" ref="5">
    <original>P</original>
    <variation>L</variation>
    <location>
        <position position="1406"/>
    </location>
</feature>
<feature type="sequence conflict" description="In Ref. 5; CAB06069." evidence="8" ref="5">
    <original>Q</original>
    <variation>R</variation>
    <location>
        <position position="1427"/>
    </location>
</feature>
<feature type="sequence conflict" description="In Ref. 5; CAB06069." evidence="8" ref="5">
    <original>LFTKYLENSINFVRNTVKEVIA</original>
    <variation>SLPSTWRIPSTCSEHSEGSDC</variation>
    <location>
        <begin position="2025"/>
        <end position="2046"/>
    </location>
</feature>
<feature type="sequence conflict" description="In Ref. 5; CAB06069." evidence="8" ref="5">
    <original>L</original>
    <variation>V</variation>
    <location>
        <position position="2052"/>
    </location>
</feature>
<sequence length="4250" mass="487070">MEECNKEGPSSSSQGPGYCPVKVPESHDLEKILQESNYHPERNPLNPDPKTPPLPLTDLRQPRKSPLTGTDKKYPLMKQRGFYSDILSPGTLDKLGNVCCGPYMSQNLIRQADLDKFTPKVDSFVIPEDFQERVEQQIIGATTRLLTQTDFPLQSYEPKVQVPFQVLPGQCPRKIEIERRKQQYLRLDIEQLLTSEGIDSNKLMPRHPDLQHPQTIEQGRDPLFPIYLPLKVFDNEEFDCRTPTEWLNMGLEPGSQNRKPVPGKALLPTDDDLGHEDPKNQELDYRWCEVGVLDYDEEKKLYLVQKTDKRGLVRDEMGMPILNGGITPAGRPPLLATQYWVPRIQLLFCAEDPRVFTQRVVQANALRKYTEALLMYNLYVDCMPTEGRRVINEQSLSKIKQWALSTPRMRKGQSVLEHLSCLAREVNLDYERSMNKINFDQIVSSNPETFSYVTLPEKEEEKVPNQGLVSVPEYPFREQKEDFTFVSLLTRPEVITALSKVRAECNKVTSMSLFHSSLSKYSRLEEFEQIQSQTFSQVQMFLKDSWISTLKVAMRGSLRDMSKGWYNLYETNWEVYLMSKLRKLMELIKYMLQDTLRFLVQDSLGSFTQFIGDACCSVLECVDDMDWGEDLVNSPYKPRKNPLFIVDLVLDNSGVHYSTPLEHFEMILLNLFDKGILATHAVPQLEKLVMEDIFISGDPLLESVGLHEPLVEELRANITNAMHKAMMPLQAYAKEYRKYLELNNNDISTFLKTYQTQCPSAEEVREVVITHLKEKEILDNSLPSSIIIGPFYINVDNVKQSLSKKRKALATSMLDILAKNLHKEVDSICEEFRSISRKIYEKPNSIEELAELRDWMKGIPEKLVFLEERIVKVMSDYEVMDEFFYNLTTDDFNDKWAANNWPSKILGQIDMVRQQHVEDEEKFRKIQLMDQNNFQEKLEGLQLVVAGFSIHVEIARAHEIANEVRRVKKQLKDCQQLAMLYNNRERIFGLPITNYDKLSRMVKEFQPYLDLWTTASDWLRWSESWMNDPLSAIDAEQLEKNVIESFKTMHKCVKQFKDIPACQEVALDIRTRIEEFKPYIPLIQGLRNPGMRNRHWEVLSNEININVRPKANLTFARCLEMNLQDHIESISKVAEVAGKEYAIEQALDKMEKEWSSILFNVLPYKETDTYILKSPDEASQLLDDHIVMTQSMSFSPYKKPFEQRINSWETKLKLTQEVLEEWLNCQRAWLYLEPIFSSEDITRQLPVESKRYQTMERIWRKIMKNAYENREVINVCSDQRLLDSLRDCNKLLDLVQKGLSEYLETKRTAFPRFYFLSDDELLEILSQTKDPTAVQPHLRKCFENIARLLFQEDLEITHMYSAEGEEVKLSFSIYPSSNVEDWLLEVERSMKASVHDIIEMAIKAYPTMLRTEWVLNWPGQVTIAGCQTYWTMEVAEALEAGNISSKLFPQLSKQLSDLVALVRGKLSRMQRMVLSALIVIEVHAKDVVSKLIDENVVSVHDFEWISQLRYYWTKDDLYIRAVNAEFIYGYEYLGNSGRLVITPLTDRCYLTLTGALHLKFGGAPAGPAGTGKTETTKDLGKALAIQTVVFNCSDQLDFMAMGKFFKGLASAGAWACFDEFNRIDIEVLSVVAQQITTIQKAQQQRVERFMFEGVEIPLVPSCAVFITMNPGYAGRTELPDNLKALFRPVAMMVPDYAMIAEISLYSFGFNEANVLAKKITTTFKLSSEQLSSQDHYDFGMRAVKTVISAAGNLKRENPTMNEELICLRAIRDVNVPKFLQEDLKLFSGIVSDLFPTIKEEETDYGILDQAIRRSCEKNNLKDVEGFLIKCIQLYETTVVRHGLMLVGPTGSGKSNCYRVLAAAMTLLKGKPSISGGVYEAVNYYVLNPKSITMGQLYGEFDLLTHEWTDGIFSSLIRAGAIASDTNKKWYMFDGPVDAVWIENMNTVLDDNKKLCLSSGEIIKLTEAMTMMFEVQDLAVASPATVSRCGMVYLEPSILGLMPFVECWLKRLPAIIKPYEEQFKSLFTKYLENSINFVRNTVKEVIASTNSNLTMSLLKLLDCFFRPFLPREGLKKIPSEKLSHIPELIEPWFIFSLVWSVGATGDHTSRISFSQWLRLKMRLEQVKLGFPEDGLVYDYRLDDAGISSTEDDDEEEDENKQVSWVKWMDYSAPFTMMPDTNYCNIIVPTMDTVQMSYLLGMLLTNHKPVLCIGPTGTGKTLTVSNKLLKYLPLEYISHFLTFSARTSANQTQDLIDSKLDKRRKGVFGPPLGRNFIFFIDDLNMPALETYGAQPPIELLRQWMDHGGWYDRKVIGAFKNLVDINFVCAMGPPGGGRNAITPRLTRHFNYLSFIEMDEVSKKRIFSIILECWMDGLLGEKSYREPVPGAPNIDDLTEPLVDATINVYGIITSQLLPTPAKSHYTFNLRDLSKVFQGMLMAEPSKVEDKVQLLRLWYHENCRVFRDRLVNEEDRSWFDELLEAQMEEFGVAFNKVCPFQPILYGDFMSPGSDVKSYELITSESKMMQVIEEYMEDYNQINTAKLRLVLFVDAMSHICRISRTLRQALGNALLLGVGGSGRSSLTRLASHMAEYECFQIELSKNYGMSEWREDVKKVLLKAGLQNLPITFLFSDTQIKNESFLEDINNVLNSGDIPNIYSADEQDQIINTMRPYIQEQGLQPTKANLMAAYTGRVRSNIHMVLCMSPIGEVFRARLRQFPSLVNCCTIDWFNEWPAEALKSVATTFLSEIPELECSEEVIQGLIQVCVFIHQSVASKCVEYLAELARHNYVTPKSYLELLNIFSILIGQKKMELKTAKNRMKSGLDKLLRTSEDVAKMQEELEIMRPLLEEAAKDTMLTMEQIKVDTAIAEETRKSVQAEEIKANEKANKAQAIADDAQKDLDEALPALDAALASLRNLNKNDVTEVRAMQRPPPGVKLVIEAVCIMKGIKPKKVPGEKPGSKVDDYWEPGKGLLQDPGRFLESLFKFDKDNIGEAVIKAIQPYIDNEEFQPAAIAKVSKACTSICQWVRAMHKYHFVAKAVEPKRQALREAQDDLEVTQRILEEAKHHLHEVEDGIATMQAKYRECVAKKEELEMKCEQCEQRLGRADKLINGLADEKVRWQETVENLENMLDNIFGDVLVAAGFVAYLGPFTGQYRTTLYEYWVNQLTVHHVPHTSKPTLITTLGNPVKIRSWQIAGLPNDTLSVENGVINQFSQRWTHFIDPQGQANKWIKNMERESGLDVFKLSDRDFLRSMENAIRFGKPCLLENVGEELDPALEPVLLKQTYKQQGNIVLKLGDTVIPYHEDFRMYITTKLPNPHYSPEISTKLTLINFTLSPSGLEDQLLGQVVAEERPDLEEAKNQLIVSNAKMRQELKDIEDQILYRLSSSEGNPVDDMELIKVLEASKMKAAEIQAKVRIAEQTEKDIDLTRMEYIPVAVRTQILFFCVSDLANVDPMYQYSLEWFLNIFLSGIANSERADNLKKRIVNINRYLTFSLYSNVCRSLFEKHKLMFAFLLCVRIMMNEGKINQAEWRYLLSGGSIQTMFENPAPQWLSDRAWRDILALSNLPTFATFSNDFVMYLSEFQAIFDSAEPHRELLPGIWNAYLDEFQKLLILRCLRGDKVTNAMQDFVATHLEPRFIEPQTANLSAVFKESNSTTPLIFVLSPGTDPAADLYKFAEEMKFSKKFSAISLGQGQGPRAEAMMRNSIERGKWVFFQNCHLAPSWMPALERLIEHINPDKVHRDFRLWLTSLPSNKFPVSILQNGSKMTIEPPRGVKANLLKSYNSLSDDFLHSCQKVVEFKSLLLSLCLFHGNALERRKFGPLGFNIPYEFTDGDLRICISQLKMFLDEYEDIPYKVLKYTAGEINYGGRVTDDWDRRCVMNILEDFYNPAVLSSEHSYSNSGIYHQIPPTYDLNGYLSYIKSLPLNDMPEIFGLHDNANITFAQNETFALFNAILQLQPKSSSMGGQSREELVEDVAENILLQVPGPIELQEVTKKFPVLYEESMNTVLVQEVIRYNKLLEVITQTLSDMLKAIKGLVVMSLELELMSISLYNNTVPELWKSKAYPSLKPLASWIMDLLLRLDFMHSWINDGIPPVFWISGFFFPQAFLTGTLQNFARKFVISIDTITFDFKVLPEASSEIKERPQTGCYIHGLFLEGARWDSMNFQLAESRPKELYTEMAVIWLLPEANRKVQNQDFYLCPIYKTLTRAGTLSTTGHSTNYVIAVEIPSNQPQRHWIKRGVALICALDY</sequence>
<evidence type="ECO:0000250" key="1"/>
<evidence type="ECO:0000250" key="2">
    <source>
        <dbReference type="UniProtKB" id="Q8TE73"/>
    </source>
</evidence>
<evidence type="ECO:0000250" key="3">
    <source>
        <dbReference type="UniProtKB" id="Q9P2D7"/>
    </source>
</evidence>
<evidence type="ECO:0000255" key="4"/>
<evidence type="ECO:0000256" key="5">
    <source>
        <dbReference type="SAM" id="MobiDB-lite"/>
    </source>
</evidence>
<evidence type="ECO:0000269" key="6">
    <source>
    </source>
</evidence>
<evidence type="ECO:0000303" key="7">
    <source>
    </source>
</evidence>
<evidence type="ECO:0000305" key="8"/>
<evidence type="ECO:0000312" key="9">
    <source>
        <dbReference type="MGI" id="MGI:107721"/>
    </source>
</evidence>
<protein>
    <recommendedName>
        <fullName evidence="8">Dynein axonemal heavy chain 1</fullName>
    </recommendedName>
    <alternativeName>
        <fullName>Axonemal beta dynein heavy chain 1</fullName>
    </alternativeName>
    <alternativeName>
        <fullName>Ciliary dynein heavy chain 1</fullName>
    </alternativeName>
    <alternativeName>
        <fullName evidence="7">mDHC7</fullName>
    </alternativeName>
</protein>
<organism>
    <name type="scientific">Mus musculus</name>
    <name type="common">Mouse</name>
    <dbReference type="NCBI Taxonomy" id="10090"/>
    <lineage>
        <taxon>Eukaryota</taxon>
        <taxon>Metazoa</taxon>
        <taxon>Chordata</taxon>
        <taxon>Craniata</taxon>
        <taxon>Vertebrata</taxon>
        <taxon>Euteleostomi</taxon>
        <taxon>Mammalia</taxon>
        <taxon>Eutheria</taxon>
        <taxon>Euarchontoglires</taxon>
        <taxon>Glires</taxon>
        <taxon>Rodentia</taxon>
        <taxon>Myomorpha</taxon>
        <taxon>Muroidea</taxon>
        <taxon>Muridae</taxon>
        <taxon>Murinae</taxon>
        <taxon>Mus</taxon>
        <taxon>Mus</taxon>
    </lineage>
</organism>
<comment type="function">
    <text evidence="3 6">Force generating protein of cilia required for sperm flagellum motility (PubMed:11371505). Produces force towards the minus ends of microtubules. Dynein has ATPase activity; the force-producing power stroke is thought to occur on release of ADP (By similarity). Required in spermatozoa for the formation of the inner dynein arms and biogenesis of the axoneme (By similarity).</text>
</comment>
<comment type="subunit">
    <text evidence="2">Consists of at least two heavy chains and a number of intermediate and light chains.</text>
</comment>
<comment type="subcellular location">
    <subcellularLocation>
        <location evidence="3">Cytoplasm</location>
        <location evidence="3">Cytoskeleton</location>
        <location evidence="3">Cilium axoneme</location>
    </subcellularLocation>
    <subcellularLocation>
        <location evidence="6">Cell projection</location>
        <location evidence="6">Cilium</location>
        <location evidence="6">Flagellum</location>
    </subcellularLocation>
</comment>
<comment type="alternative products">
    <event type="alternative splicing"/>
    <isoform>
        <id>E9Q8T7-1</id>
        <name>1</name>
        <sequence type="displayed"/>
    </isoform>
    <isoform>
        <id>E9Q8T7-2</id>
        <name>2</name>
        <sequence type="described" ref="VSP_059235 VSP_059236"/>
    </isoform>
</comment>
<comment type="disruption phenotype">
    <text evidence="6">Mice are viable and show no malformations; however, homozygous males are infertile, due to inability of spermatozoa to move from the uterus into the oviduct. Spermatozoa show decreased motility. In addition, tracheal beating frequency is reduced.</text>
</comment>
<comment type="similarity">
    <text evidence="8">Belongs to the dynein heavy chain family.</text>
</comment>
<gene>
    <name evidence="9" type="primary">Dnah1</name>
    <name type="synonym">Dhc7</name>
    <name evidence="9" type="synonym">Dnahc1</name>
</gene>
<dbReference type="EMBL" id="AK053204">
    <property type="protein sequence ID" value="BAC35309.1"/>
    <property type="molecule type" value="mRNA"/>
</dbReference>
<dbReference type="EMBL" id="AC108416">
    <property type="status" value="NOT_ANNOTATED_CDS"/>
    <property type="molecule type" value="Genomic_DNA"/>
</dbReference>
<dbReference type="EMBL" id="CH466573">
    <property type="protein sequence ID" value="EDL24805.1"/>
    <property type="molecule type" value="Genomic_DNA"/>
</dbReference>
<dbReference type="EMBL" id="BC023155">
    <property type="protein sequence ID" value="AAH23155.1"/>
    <property type="molecule type" value="mRNA"/>
</dbReference>
<dbReference type="EMBL" id="Z83815">
    <property type="protein sequence ID" value="CAB06069.2"/>
    <property type="molecule type" value="mRNA"/>
</dbReference>
<dbReference type="CCDS" id="CCDS49436.1">
    <molecule id="E9Q8T7-1"/>
</dbReference>
<dbReference type="RefSeq" id="NP_001028840.1">
    <molecule id="E9Q8T7-1"/>
    <property type="nucleotide sequence ID" value="NM_001033668.1"/>
</dbReference>
<dbReference type="RefSeq" id="XP_017171287.1">
    <property type="nucleotide sequence ID" value="XM_017315798.1"/>
</dbReference>
<dbReference type="RefSeq" id="XP_017171288.1">
    <property type="nucleotide sequence ID" value="XM_017315799.1"/>
</dbReference>
<dbReference type="SMR" id="E9Q8T7"/>
<dbReference type="FunCoup" id="E9Q8T7">
    <property type="interactions" value="60"/>
</dbReference>
<dbReference type="STRING" id="10090.ENSMUSP00000043281"/>
<dbReference type="GlyGen" id="E9Q8T7">
    <property type="glycosylation" value="5 sites"/>
</dbReference>
<dbReference type="iPTMnet" id="E9Q8T7"/>
<dbReference type="PhosphoSitePlus" id="E9Q8T7"/>
<dbReference type="jPOST" id="E9Q8T7"/>
<dbReference type="PaxDb" id="10090-ENSMUSP00000043281"/>
<dbReference type="ProteomicsDB" id="277420">
    <molecule id="E9Q8T7-1"/>
</dbReference>
<dbReference type="ProteomicsDB" id="277421">
    <molecule id="E9Q8T7-2"/>
</dbReference>
<dbReference type="Antibodypedia" id="48327">
    <property type="antibodies" value="44 antibodies from 12 providers"/>
</dbReference>
<dbReference type="DNASU" id="110084"/>
<dbReference type="Ensembl" id="ENSMUST00000048603.8">
    <molecule id="E9Q8T7-1"/>
    <property type="protein sequence ID" value="ENSMUSP00000043281.8"/>
    <property type="gene ID" value="ENSMUSG00000019027.9"/>
</dbReference>
<dbReference type="GeneID" id="110084"/>
<dbReference type="KEGG" id="mmu:110084"/>
<dbReference type="UCSC" id="uc007sxk.2">
    <molecule id="E9Q8T7-1"/>
    <property type="organism name" value="mouse"/>
</dbReference>
<dbReference type="UCSC" id="uc007sxl.1">
    <property type="organism name" value="mouse"/>
</dbReference>
<dbReference type="AGR" id="MGI:107721"/>
<dbReference type="CTD" id="25981"/>
<dbReference type="MGI" id="MGI:107721">
    <property type="gene designation" value="Dnah1"/>
</dbReference>
<dbReference type="VEuPathDB" id="HostDB:ENSMUSG00000019027"/>
<dbReference type="eggNOG" id="KOG3595">
    <property type="taxonomic scope" value="Eukaryota"/>
</dbReference>
<dbReference type="GeneTree" id="ENSGT00940000154791"/>
<dbReference type="HOGENOM" id="CLU_000038_0_0_1"/>
<dbReference type="InParanoid" id="E9Q8T7"/>
<dbReference type="OMA" id="HNVAKMV"/>
<dbReference type="OrthoDB" id="447173at2759"/>
<dbReference type="PhylomeDB" id="E9Q8T7"/>
<dbReference type="TreeFam" id="TF316836"/>
<dbReference type="BioGRID-ORCS" id="110084">
    <property type="hits" value="3 hits in 76 CRISPR screens"/>
</dbReference>
<dbReference type="PRO" id="PR:E9Q8T7"/>
<dbReference type="Proteomes" id="UP000000589">
    <property type="component" value="Chromosome 14"/>
</dbReference>
<dbReference type="RNAct" id="E9Q8T7">
    <property type="molecule type" value="protein"/>
</dbReference>
<dbReference type="Bgee" id="ENSMUSG00000019027">
    <property type="expression patterns" value="Expressed in spermatocyte and 113 other cell types or tissues"/>
</dbReference>
<dbReference type="GO" id="GO:0005576">
    <property type="term" value="C:extracellular region"/>
    <property type="evidence" value="ECO:0007669"/>
    <property type="project" value="GOC"/>
</dbReference>
<dbReference type="GO" id="GO:0036156">
    <property type="term" value="C:inner dynein arm"/>
    <property type="evidence" value="ECO:0000255"/>
    <property type="project" value="MGI"/>
</dbReference>
<dbReference type="GO" id="GO:0005874">
    <property type="term" value="C:microtubule"/>
    <property type="evidence" value="ECO:0007669"/>
    <property type="project" value="UniProtKB-KW"/>
</dbReference>
<dbReference type="GO" id="GO:0036126">
    <property type="term" value="C:sperm flagellum"/>
    <property type="evidence" value="ECO:0000314"/>
    <property type="project" value="MGI"/>
</dbReference>
<dbReference type="GO" id="GO:0005524">
    <property type="term" value="F:ATP binding"/>
    <property type="evidence" value="ECO:0007669"/>
    <property type="project" value="UniProtKB-KW"/>
</dbReference>
<dbReference type="GO" id="GO:0045505">
    <property type="term" value="F:dynein intermediate chain binding"/>
    <property type="evidence" value="ECO:0007669"/>
    <property type="project" value="InterPro"/>
</dbReference>
<dbReference type="GO" id="GO:0051959">
    <property type="term" value="F:dynein light intermediate chain binding"/>
    <property type="evidence" value="ECO:0007669"/>
    <property type="project" value="InterPro"/>
</dbReference>
<dbReference type="GO" id="GO:0003777">
    <property type="term" value="F:microtubule motor activity"/>
    <property type="evidence" value="ECO:0000305"/>
    <property type="project" value="MGI"/>
</dbReference>
<dbReference type="GO" id="GO:0008569">
    <property type="term" value="F:minus-end-directed microtubule motor activity"/>
    <property type="evidence" value="ECO:0007669"/>
    <property type="project" value="InterPro"/>
</dbReference>
<dbReference type="GO" id="GO:0060294">
    <property type="term" value="P:cilium movement involved in cell motility"/>
    <property type="evidence" value="ECO:0000315"/>
    <property type="project" value="MGI"/>
</dbReference>
<dbReference type="GO" id="GO:0003351">
    <property type="term" value="P:epithelial cilium movement involved in extracellular fluid movement"/>
    <property type="evidence" value="ECO:0000315"/>
    <property type="project" value="MGI"/>
</dbReference>
<dbReference type="GO" id="GO:0030317">
    <property type="term" value="P:flagellated sperm motility"/>
    <property type="evidence" value="ECO:0000315"/>
    <property type="project" value="MGI"/>
</dbReference>
<dbReference type="GO" id="GO:0036159">
    <property type="term" value="P:inner dynein arm assembly"/>
    <property type="evidence" value="ECO:0007669"/>
    <property type="project" value="Ensembl"/>
</dbReference>
<dbReference type="GO" id="GO:0007288">
    <property type="term" value="P:sperm axoneme assembly"/>
    <property type="evidence" value="ECO:0007669"/>
    <property type="project" value="Ensembl"/>
</dbReference>
<dbReference type="FunFam" id="1.10.472.130:FF:000006">
    <property type="entry name" value="Dynein axonemal heavy chain 1"/>
    <property type="match status" value="1"/>
</dbReference>
<dbReference type="FunFam" id="1.10.8.1220:FF:000001">
    <property type="entry name" value="Dynein axonemal heavy chain 5"/>
    <property type="match status" value="1"/>
</dbReference>
<dbReference type="FunFam" id="1.10.8.710:FF:000004">
    <property type="entry name" value="Dynein axonemal heavy chain 6"/>
    <property type="match status" value="1"/>
</dbReference>
<dbReference type="FunFam" id="1.20.140.100:FF:000004">
    <property type="entry name" value="Dynein axonemal heavy chain 6"/>
    <property type="match status" value="1"/>
</dbReference>
<dbReference type="FunFam" id="3.40.50.300:FF:002141">
    <property type="entry name" value="Dynein heavy chain"/>
    <property type="match status" value="1"/>
</dbReference>
<dbReference type="FunFam" id="1.10.287.2620:FF:000005">
    <property type="entry name" value="Dynein heavy chain 1, axonemal"/>
    <property type="match status" value="1"/>
</dbReference>
<dbReference type="FunFam" id="3.20.180.20:FF:000003">
    <property type="entry name" value="Dynein heavy chain 12, axonemal"/>
    <property type="match status" value="1"/>
</dbReference>
<dbReference type="FunFam" id="3.40.50.300:FF:000223">
    <property type="entry name" value="Dynein heavy chain 3, axonemal"/>
    <property type="match status" value="1"/>
</dbReference>
<dbReference type="FunFam" id="3.40.50.300:FF:000044">
    <property type="entry name" value="Dynein heavy chain 5, axonemal"/>
    <property type="match status" value="1"/>
</dbReference>
<dbReference type="FunFam" id="3.40.50.300:FF:001328">
    <property type="entry name" value="Dynein heavy chain 6, axonemal"/>
    <property type="match status" value="1"/>
</dbReference>
<dbReference type="FunFam" id="1.10.8.720:FF:000001">
    <property type="entry name" value="dynein heavy chain 7, axonemal"/>
    <property type="match status" value="1"/>
</dbReference>
<dbReference type="FunFam" id="1.20.1270.280:FF:000001">
    <property type="entry name" value="dynein heavy chain 7, axonemal"/>
    <property type="match status" value="1"/>
</dbReference>
<dbReference type="FunFam" id="3.10.490.20:FF:000001">
    <property type="entry name" value="dynein heavy chain 7, axonemal"/>
    <property type="match status" value="1"/>
</dbReference>
<dbReference type="FunFam" id="1.20.58.1120:FF:000005">
    <property type="entry name" value="Dynein, axonemal, heavy chain 12"/>
    <property type="match status" value="1"/>
</dbReference>
<dbReference type="FunFam" id="1.20.920.30:FF:000005">
    <property type="entry name" value="Dynein, axonemal, heavy chain 2"/>
    <property type="match status" value="1"/>
</dbReference>
<dbReference type="FunFam" id="1.20.920.20:FF:000006">
    <property type="entry name" value="Dynein, axonemal, heavy chain 6"/>
    <property type="match status" value="1"/>
</dbReference>
<dbReference type="FunFam" id="3.40.50.300:FF:000362">
    <property type="entry name" value="Dynein, axonemal, heavy chain 6"/>
    <property type="match status" value="1"/>
</dbReference>
<dbReference type="Gene3D" id="1.10.287.2620">
    <property type="match status" value="1"/>
</dbReference>
<dbReference type="Gene3D" id="1.10.472.130">
    <property type="match status" value="1"/>
</dbReference>
<dbReference type="Gene3D" id="1.10.8.1220">
    <property type="match status" value="1"/>
</dbReference>
<dbReference type="Gene3D" id="1.10.8.710">
    <property type="match status" value="1"/>
</dbReference>
<dbReference type="Gene3D" id="1.20.1270.280">
    <property type="match status" value="1"/>
</dbReference>
<dbReference type="Gene3D" id="1.20.58.1120">
    <property type="match status" value="1"/>
</dbReference>
<dbReference type="Gene3D" id="1.20.920.20">
    <property type="match status" value="1"/>
</dbReference>
<dbReference type="Gene3D" id="1.20.920.30">
    <property type="match status" value="1"/>
</dbReference>
<dbReference type="Gene3D" id="3.10.490.20">
    <property type="match status" value="1"/>
</dbReference>
<dbReference type="Gene3D" id="6.10.140.1060">
    <property type="match status" value="1"/>
</dbReference>
<dbReference type="Gene3D" id="1.20.140.100">
    <property type="entry name" value="Dynein heavy chain, N-terminal domain 2"/>
    <property type="match status" value="1"/>
</dbReference>
<dbReference type="Gene3D" id="3.20.180.20">
    <property type="entry name" value="Dynein heavy chain, N-terminal domain 2"/>
    <property type="match status" value="1"/>
</dbReference>
<dbReference type="Gene3D" id="3.40.50.300">
    <property type="entry name" value="P-loop containing nucleotide triphosphate hydrolases"/>
    <property type="match status" value="5"/>
</dbReference>
<dbReference type="Gene3D" id="1.10.8.720">
    <property type="entry name" value="Region D6 of dynein motor"/>
    <property type="match status" value="1"/>
</dbReference>
<dbReference type="InterPro" id="IPR035699">
    <property type="entry name" value="AAA_6"/>
</dbReference>
<dbReference type="InterPro" id="IPR035706">
    <property type="entry name" value="AAA_9"/>
</dbReference>
<dbReference type="InterPro" id="IPR041658">
    <property type="entry name" value="AAA_lid_11"/>
</dbReference>
<dbReference type="InterPro" id="IPR042219">
    <property type="entry name" value="AAA_lid_11_sf"/>
</dbReference>
<dbReference type="InterPro" id="IPR026983">
    <property type="entry name" value="DHC"/>
</dbReference>
<dbReference type="InterPro" id="IPR041589">
    <property type="entry name" value="DNAH3_AAA_lid_1"/>
</dbReference>
<dbReference type="InterPro" id="IPR042222">
    <property type="entry name" value="Dynein_2_N"/>
</dbReference>
<dbReference type="InterPro" id="IPR043157">
    <property type="entry name" value="Dynein_AAA1S"/>
</dbReference>
<dbReference type="InterPro" id="IPR041466">
    <property type="entry name" value="Dynein_AAA5_ext"/>
</dbReference>
<dbReference type="InterPro" id="IPR041228">
    <property type="entry name" value="Dynein_C"/>
</dbReference>
<dbReference type="InterPro" id="IPR043160">
    <property type="entry name" value="Dynein_C_barrel"/>
</dbReference>
<dbReference type="InterPro" id="IPR024743">
    <property type="entry name" value="Dynein_HC_stalk"/>
</dbReference>
<dbReference type="InterPro" id="IPR024317">
    <property type="entry name" value="Dynein_heavy_chain_D4_dom"/>
</dbReference>
<dbReference type="InterPro" id="IPR004273">
    <property type="entry name" value="Dynein_heavy_D6_P-loop"/>
</dbReference>
<dbReference type="InterPro" id="IPR013602">
    <property type="entry name" value="Dynein_heavy_linker"/>
</dbReference>
<dbReference type="InterPro" id="IPR042228">
    <property type="entry name" value="Dynein_linker_3"/>
</dbReference>
<dbReference type="InterPro" id="IPR027417">
    <property type="entry name" value="P-loop_NTPase"/>
</dbReference>
<dbReference type="PANTHER" id="PTHR22878:SF73">
    <property type="entry name" value="DYNEIN AXONEMAL HEAVY CHAIN 1"/>
    <property type="match status" value="1"/>
</dbReference>
<dbReference type="PANTHER" id="PTHR22878">
    <property type="entry name" value="DYNEIN HEAVY CHAIN 6, AXONEMAL-LIKE-RELATED"/>
    <property type="match status" value="1"/>
</dbReference>
<dbReference type="Pfam" id="PF12774">
    <property type="entry name" value="AAA_6"/>
    <property type="match status" value="1"/>
</dbReference>
<dbReference type="Pfam" id="PF12775">
    <property type="entry name" value="AAA_7"/>
    <property type="match status" value="1"/>
</dbReference>
<dbReference type="Pfam" id="PF12780">
    <property type="entry name" value="AAA_8"/>
    <property type="match status" value="1"/>
</dbReference>
<dbReference type="Pfam" id="PF12781">
    <property type="entry name" value="AAA_9"/>
    <property type="match status" value="1"/>
</dbReference>
<dbReference type="Pfam" id="PF17857">
    <property type="entry name" value="AAA_lid_1"/>
    <property type="match status" value="1"/>
</dbReference>
<dbReference type="Pfam" id="PF18198">
    <property type="entry name" value="AAA_lid_11"/>
    <property type="match status" value="1"/>
</dbReference>
<dbReference type="Pfam" id="PF08393">
    <property type="entry name" value="DHC_N2"/>
    <property type="match status" value="1"/>
</dbReference>
<dbReference type="Pfam" id="PF17852">
    <property type="entry name" value="Dynein_AAA_lid"/>
    <property type="match status" value="1"/>
</dbReference>
<dbReference type="Pfam" id="PF18199">
    <property type="entry name" value="Dynein_C"/>
    <property type="match status" value="1"/>
</dbReference>
<dbReference type="Pfam" id="PF03028">
    <property type="entry name" value="Dynein_heavy"/>
    <property type="match status" value="1"/>
</dbReference>
<dbReference type="Pfam" id="PF12777">
    <property type="entry name" value="MT"/>
    <property type="match status" value="1"/>
</dbReference>
<dbReference type="SUPFAM" id="SSF52540">
    <property type="entry name" value="P-loop containing nucleoside triphosphate hydrolases"/>
    <property type="match status" value="4"/>
</dbReference>
<name>DYH1_MOUSE</name>
<keyword id="KW-0025">Alternative splicing</keyword>
<keyword id="KW-0067">ATP-binding</keyword>
<keyword id="KW-0966">Cell projection</keyword>
<keyword id="KW-0969">Cilium</keyword>
<keyword id="KW-0175">Coiled coil</keyword>
<keyword id="KW-0963">Cytoplasm</keyword>
<keyword id="KW-0206">Cytoskeleton</keyword>
<keyword id="KW-0243">Dynein</keyword>
<keyword id="KW-0282">Flagellum</keyword>
<keyword id="KW-0493">Microtubule</keyword>
<keyword id="KW-0505">Motor protein</keyword>
<keyword id="KW-0547">Nucleotide-binding</keyword>
<keyword id="KW-1185">Reference proteome</keyword>
<proteinExistence type="evidence at protein level"/>
<accession>E9Q8T7</accession>
<accession>O08828</accession>
<accession>Q8R584</accession>
<reference key="1">
    <citation type="journal article" date="2005" name="Science">
        <title>The transcriptional landscape of the mammalian genome.</title>
        <authorList>
            <person name="Carninci P."/>
            <person name="Kasukawa T."/>
            <person name="Katayama S."/>
            <person name="Gough J."/>
            <person name="Frith M.C."/>
            <person name="Maeda N."/>
            <person name="Oyama R."/>
            <person name="Ravasi T."/>
            <person name="Lenhard B."/>
            <person name="Wells C."/>
            <person name="Kodzius R."/>
            <person name="Shimokawa K."/>
            <person name="Bajic V.B."/>
            <person name="Brenner S.E."/>
            <person name="Batalov S."/>
            <person name="Forrest A.R."/>
            <person name="Zavolan M."/>
            <person name="Davis M.J."/>
            <person name="Wilming L.G."/>
            <person name="Aidinis V."/>
            <person name="Allen J.E."/>
            <person name="Ambesi-Impiombato A."/>
            <person name="Apweiler R."/>
            <person name="Aturaliya R.N."/>
            <person name="Bailey T.L."/>
            <person name="Bansal M."/>
            <person name="Baxter L."/>
            <person name="Beisel K.W."/>
            <person name="Bersano T."/>
            <person name="Bono H."/>
            <person name="Chalk A.M."/>
            <person name="Chiu K.P."/>
            <person name="Choudhary V."/>
            <person name="Christoffels A."/>
            <person name="Clutterbuck D.R."/>
            <person name="Crowe M.L."/>
            <person name="Dalla E."/>
            <person name="Dalrymple B.P."/>
            <person name="de Bono B."/>
            <person name="Della Gatta G."/>
            <person name="di Bernardo D."/>
            <person name="Down T."/>
            <person name="Engstrom P."/>
            <person name="Fagiolini M."/>
            <person name="Faulkner G."/>
            <person name="Fletcher C.F."/>
            <person name="Fukushima T."/>
            <person name="Furuno M."/>
            <person name="Futaki S."/>
            <person name="Gariboldi M."/>
            <person name="Georgii-Hemming P."/>
            <person name="Gingeras T.R."/>
            <person name="Gojobori T."/>
            <person name="Green R.E."/>
            <person name="Gustincich S."/>
            <person name="Harbers M."/>
            <person name="Hayashi Y."/>
            <person name="Hensch T.K."/>
            <person name="Hirokawa N."/>
            <person name="Hill D."/>
            <person name="Huminiecki L."/>
            <person name="Iacono M."/>
            <person name="Ikeo K."/>
            <person name="Iwama A."/>
            <person name="Ishikawa T."/>
            <person name="Jakt M."/>
            <person name="Kanapin A."/>
            <person name="Katoh M."/>
            <person name="Kawasawa Y."/>
            <person name="Kelso J."/>
            <person name="Kitamura H."/>
            <person name="Kitano H."/>
            <person name="Kollias G."/>
            <person name="Krishnan S.P."/>
            <person name="Kruger A."/>
            <person name="Kummerfeld S.K."/>
            <person name="Kurochkin I.V."/>
            <person name="Lareau L.F."/>
            <person name="Lazarevic D."/>
            <person name="Lipovich L."/>
            <person name="Liu J."/>
            <person name="Liuni S."/>
            <person name="McWilliam S."/>
            <person name="Madan Babu M."/>
            <person name="Madera M."/>
            <person name="Marchionni L."/>
            <person name="Matsuda H."/>
            <person name="Matsuzawa S."/>
            <person name="Miki H."/>
            <person name="Mignone F."/>
            <person name="Miyake S."/>
            <person name="Morris K."/>
            <person name="Mottagui-Tabar S."/>
            <person name="Mulder N."/>
            <person name="Nakano N."/>
            <person name="Nakauchi H."/>
            <person name="Ng P."/>
            <person name="Nilsson R."/>
            <person name="Nishiguchi S."/>
            <person name="Nishikawa S."/>
            <person name="Nori F."/>
            <person name="Ohara O."/>
            <person name="Okazaki Y."/>
            <person name="Orlando V."/>
            <person name="Pang K.C."/>
            <person name="Pavan W.J."/>
            <person name="Pavesi G."/>
            <person name="Pesole G."/>
            <person name="Petrovsky N."/>
            <person name="Piazza S."/>
            <person name="Reed J."/>
            <person name="Reid J.F."/>
            <person name="Ring B.Z."/>
            <person name="Ringwald M."/>
            <person name="Rost B."/>
            <person name="Ruan Y."/>
            <person name="Salzberg S.L."/>
            <person name="Sandelin A."/>
            <person name="Schneider C."/>
            <person name="Schoenbach C."/>
            <person name="Sekiguchi K."/>
            <person name="Semple C.A."/>
            <person name="Seno S."/>
            <person name="Sessa L."/>
            <person name="Sheng Y."/>
            <person name="Shibata Y."/>
            <person name="Shimada H."/>
            <person name="Shimada K."/>
            <person name="Silva D."/>
            <person name="Sinclair B."/>
            <person name="Sperling S."/>
            <person name="Stupka E."/>
            <person name="Sugiura K."/>
            <person name="Sultana R."/>
            <person name="Takenaka Y."/>
            <person name="Taki K."/>
            <person name="Tammoja K."/>
            <person name="Tan S.L."/>
            <person name="Tang S."/>
            <person name="Taylor M.S."/>
            <person name="Tegner J."/>
            <person name="Teichmann S.A."/>
            <person name="Ueda H.R."/>
            <person name="van Nimwegen E."/>
            <person name="Verardo R."/>
            <person name="Wei C.L."/>
            <person name="Yagi K."/>
            <person name="Yamanishi H."/>
            <person name="Zabarovsky E."/>
            <person name="Zhu S."/>
            <person name="Zimmer A."/>
            <person name="Hide W."/>
            <person name="Bult C."/>
            <person name="Grimmond S.M."/>
            <person name="Teasdale R.D."/>
            <person name="Liu E.T."/>
            <person name="Brusic V."/>
            <person name="Quackenbush J."/>
            <person name="Wahlestedt C."/>
            <person name="Mattick J.S."/>
            <person name="Hume D.A."/>
            <person name="Kai C."/>
            <person name="Sasaki D."/>
            <person name="Tomaru Y."/>
            <person name="Fukuda S."/>
            <person name="Kanamori-Katayama M."/>
            <person name="Suzuki M."/>
            <person name="Aoki J."/>
            <person name="Arakawa T."/>
            <person name="Iida J."/>
            <person name="Imamura K."/>
            <person name="Itoh M."/>
            <person name="Kato T."/>
            <person name="Kawaji H."/>
            <person name="Kawagashira N."/>
            <person name="Kawashima T."/>
            <person name="Kojima M."/>
            <person name="Kondo S."/>
            <person name="Konno H."/>
            <person name="Nakano K."/>
            <person name="Ninomiya N."/>
            <person name="Nishio T."/>
            <person name="Okada M."/>
            <person name="Plessy C."/>
            <person name="Shibata K."/>
            <person name="Shiraki T."/>
            <person name="Suzuki S."/>
            <person name="Tagami M."/>
            <person name="Waki K."/>
            <person name="Watahiki A."/>
            <person name="Okamura-Oho Y."/>
            <person name="Suzuki H."/>
            <person name="Kawai J."/>
            <person name="Hayashizaki Y."/>
        </authorList>
    </citation>
    <scope>NUCLEOTIDE SEQUENCE [LARGE SCALE MRNA] (ISOFORM 2)</scope>
    <source>
        <strain>C57BL/6J</strain>
        <tissue>Lung</tissue>
    </source>
</reference>
<reference key="2">
    <citation type="journal article" date="2009" name="PLoS Biol.">
        <title>Lineage-specific biology revealed by a finished genome assembly of the mouse.</title>
        <authorList>
            <person name="Church D.M."/>
            <person name="Goodstadt L."/>
            <person name="Hillier L.W."/>
            <person name="Zody M.C."/>
            <person name="Goldstein S."/>
            <person name="She X."/>
            <person name="Bult C.J."/>
            <person name="Agarwala R."/>
            <person name="Cherry J.L."/>
            <person name="DiCuccio M."/>
            <person name="Hlavina W."/>
            <person name="Kapustin Y."/>
            <person name="Meric P."/>
            <person name="Maglott D."/>
            <person name="Birtle Z."/>
            <person name="Marques A.C."/>
            <person name="Graves T."/>
            <person name="Zhou S."/>
            <person name="Teague B."/>
            <person name="Potamousis K."/>
            <person name="Churas C."/>
            <person name="Place M."/>
            <person name="Herschleb J."/>
            <person name="Runnheim R."/>
            <person name="Forrest D."/>
            <person name="Amos-Landgraf J."/>
            <person name="Schwartz D.C."/>
            <person name="Cheng Z."/>
            <person name="Lindblad-Toh K."/>
            <person name="Eichler E.E."/>
            <person name="Ponting C.P."/>
        </authorList>
    </citation>
    <scope>NUCLEOTIDE SEQUENCE [LARGE SCALE GENOMIC DNA]</scope>
    <source>
        <strain>C57BL/6J</strain>
    </source>
</reference>
<reference key="3">
    <citation type="submission" date="2005-07" db="EMBL/GenBank/DDBJ databases">
        <authorList>
            <person name="Mural R.J."/>
            <person name="Adams M.D."/>
            <person name="Myers E.W."/>
            <person name="Smith H.O."/>
            <person name="Venter J.C."/>
        </authorList>
    </citation>
    <scope>NUCLEOTIDE SEQUENCE [LARGE SCALE GENOMIC DNA]</scope>
</reference>
<reference key="4">
    <citation type="journal article" date="2004" name="Genome Res.">
        <title>The status, quality, and expansion of the NIH full-length cDNA project: the Mammalian Gene Collection (MGC).</title>
        <authorList>
            <consortium name="The MGC Project Team"/>
        </authorList>
    </citation>
    <scope>NUCLEOTIDE SEQUENCE [LARGE SCALE MRNA] (ISOFORM 2)</scope>
    <source>
        <strain>FVB/N</strain>
    </source>
</reference>
<reference key="5">
    <citation type="journal article" date="1997" name="Gene">
        <title>Identification of dynein heavy chain genes expressed in human and mouse testis: chromosomal localization of an axonemal dynein gene.</title>
        <authorList>
            <person name="Neesen J."/>
            <person name="Koehler M.R."/>
            <person name="Kirschner R."/>
            <person name="Steinlein C."/>
            <person name="Kreutzberger J."/>
            <person name="Engel W."/>
            <person name="Schmid M."/>
        </authorList>
    </citation>
    <scope>NUCLEOTIDE SEQUENCE [MRNA] OF 809-2156</scope>
    <source>
        <strain>NMRI</strain>
        <tissue>Testis</tissue>
    </source>
</reference>
<reference key="6">
    <citation type="journal article" date="2001" name="Hum. Mol. Genet.">
        <title>Disruption of an inner arm dynein heavy chain gene results in asthenozoospermia and reduced ciliary beat frequency.</title>
        <authorList>
            <person name="Neesen J."/>
            <person name="Kirschner R."/>
            <person name="Ochs M."/>
            <person name="Schmiedl A."/>
            <person name="Habermann B."/>
            <person name="Mueller C."/>
            <person name="Holstein A.F."/>
            <person name="Nuesslein T."/>
            <person name="Adham I."/>
            <person name="Engel W."/>
        </authorList>
    </citation>
    <scope>FUNCTION</scope>
    <scope>SUBCELLULAR LOCATION</scope>
    <scope>DISRUPTION PHENOTYPE</scope>
</reference>
<reference key="7">
    <citation type="journal article" date="2009" name="Mol. Cell. Proteomics">
        <title>Large scale localization of protein phosphorylation by use of electron capture dissociation mass spectrometry.</title>
        <authorList>
            <person name="Sweet S.M."/>
            <person name="Bailey C.M."/>
            <person name="Cunningham D.L."/>
            <person name="Heath J.K."/>
            <person name="Cooper H.J."/>
        </authorList>
    </citation>
    <scope>IDENTIFICATION BY MASS SPECTROMETRY [LARGE SCALE ANALYSIS]</scope>
    <source>
        <tissue>Embryonic fibroblast</tissue>
    </source>
</reference>
<reference key="8">
    <citation type="journal article" date="2010" name="Cell">
        <title>A tissue-specific atlas of mouse protein phosphorylation and expression.</title>
        <authorList>
            <person name="Huttlin E.L."/>
            <person name="Jedrychowski M.P."/>
            <person name="Elias J.E."/>
            <person name="Goswami T."/>
            <person name="Rad R."/>
            <person name="Beausoleil S.A."/>
            <person name="Villen J."/>
            <person name="Haas W."/>
            <person name="Sowa M.E."/>
            <person name="Gygi S.P."/>
        </authorList>
    </citation>
    <scope>IDENTIFICATION BY MASS SPECTROMETRY [LARGE SCALE ANALYSIS]</scope>
    <source>
        <tissue>Testis</tissue>
    </source>
</reference>